<feature type="chain" id="PRO_1000195647" description="Large ribosomal subunit protein uL11">
    <location>
        <begin position="1"/>
        <end position="140"/>
    </location>
</feature>
<evidence type="ECO:0000255" key="1">
    <source>
        <dbReference type="HAMAP-Rule" id="MF_00736"/>
    </source>
</evidence>
<evidence type="ECO:0000305" key="2"/>
<name>RL11_HALOH</name>
<sequence>MAKKVIGKIKLQIPAGKANPAPPVGPALGQHGVNIMEFCKAFNAKTQDQAGMIIPVEITVYADRSFDFITKTPPASDLLKKAAGLERASGQPNINKVGTVTKEDIKEIAELKMPDLNAGSLEAAMRMIEGTARSMGIVVK</sequence>
<reference key="1">
    <citation type="journal article" date="2009" name="PLoS ONE">
        <title>Genome analysis of the anaerobic thermohalophilic bacterium Halothermothrix orenii.</title>
        <authorList>
            <person name="Mavromatis K."/>
            <person name="Ivanova N."/>
            <person name="Anderson I."/>
            <person name="Lykidis A."/>
            <person name="Hooper S.D."/>
            <person name="Sun H."/>
            <person name="Kunin V."/>
            <person name="Lapidus A."/>
            <person name="Hugenholtz P."/>
            <person name="Patel B."/>
            <person name="Kyrpides N.C."/>
        </authorList>
    </citation>
    <scope>NUCLEOTIDE SEQUENCE [LARGE SCALE GENOMIC DNA]</scope>
    <source>
        <strain>H 168 / OCM 544 / DSM 9562</strain>
    </source>
</reference>
<comment type="function">
    <text evidence="1">Forms part of the ribosomal stalk which helps the ribosome interact with GTP-bound translation factors.</text>
</comment>
<comment type="subunit">
    <text evidence="1">Part of the ribosomal stalk of the 50S ribosomal subunit. Interacts with L10 and the large rRNA to form the base of the stalk. L10 forms an elongated spine to which L12 dimers bind in a sequential fashion forming a multimeric L10(L12)X complex.</text>
</comment>
<comment type="PTM">
    <text evidence="1">One or more lysine residues are methylated.</text>
</comment>
<comment type="similarity">
    <text evidence="1">Belongs to the universal ribosomal protein uL11 family.</text>
</comment>
<proteinExistence type="inferred from homology"/>
<gene>
    <name evidence="1" type="primary">rplK</name>
    <name type="ordered locus">Hore_01050</name>
</gene>
<keyword id="KW-0488">Methylation</keyword>
<keyword id="KW-1185">Reference proteome</keyword>
<keyword id="KW-0687">Ribonucleoprotein</keyword>
<keyword id="KW-0689">Ribosomal protein</keyword>
<keyword id="KW-0694">RNA-binding</keyword>
<keyword id="KW-0699">rRNA-binding</keyword>
<organism>
    <name type="scientific">Halothermothrix orenii (strain H 168 / OCM 544 / DSM 9562)</name>
    <dbReference type="NCBI Taxonomy" id="373903"/>
    <lineage>
        <taxon>Bacteria</taxon>
        <taxon>Bacillati</taxon>
        <taxon>Bacillota</taxon>
        <taxon>Clostridia</taxon>
        <taxon>Halanaerobiales</taxon>
        <taxon>Halothermotrichaceae</taxon>
        <taxon>Halothermothrix</taxon>
    </lineage>
</organism>
<accession>B8D0B2</accession>
<dbReference type="EMBL" id="CP001098">
    <property type="protein sequence ID" value="ACL68866.1"/>
    <property type="molecule type" value="Genomic_DNA"/>
</dbReference>
<dbReference type="RefSeq" id="WP_012635065.1">
    <property type="nucleotide sequence ID" value="NC_011899.1"/>
</dbReference>
<dbReference type="SMR" id="B8D0B2"/>
<dbReference type="STRING" id="373903.Hore_01050"/>
<dbReference type="KEGG" id="hor:Hore_01050"/>
<dbReference type="eggNOG" id="COG0080">
    <property type="taxonomic scope" value="Bacteria"/>
</dbReference>
<dbReference type="HOGENOM" id="CLU_074237_2_1_9"/>
<dbReference type="OrthoDB" id="9802408at2"/>
<dbReference type="Proteomes" id="UP000000719">
    <property type="component" value="Chromosome"/>
</dbReference>
<dbReference type="GO" id="GO:0022625">
    <property type="term" value="C:cytosolic large ribosomal subunit"/>
    <property type="evidence" value="ECO:0007669"/>
    <property type="project" value="TreeGrafter"/>
</dbReference>
<dbReference type="GO" id="GO:0070180">
    <property type="term" value="F:large ribosomal subunit rRNA binding"/>
    <property type="evidence" value="ECO:0007669"/>
    <property type="project" value="UniProtKB-UniRule"/>
</dbReference>
<dbReference type="GO" id="GO:0003735">
    <property type="term" value="F:structural constituent of ribosome"/>
    <property type="evidence" value="ECO:0007669"/>
    <property type="project" value="InterPro"/>
</dbReference>
<dbReference type="GO" id="GO:0006412">
    <property type="term" value="P:translation"/>
    <property type="evidence" value="ECO:0007669"/>
    <property type="project" value="UniProtKB-UniRule"/>
</dbReference>
<dbReference type="CDD" id="cd00349">
    <property type="entry name" value="Ribosomal_L11"/>
    <property type="match status" value="1"/>
</dbReference>
<dbReference type="FunFam" id="1.10.10.250:FF:000001">
    <property type="entry name" value="50S ribosomal protein L11"/>
    <property type="match status" value="1"/>
</dbReference>
<dbReference type="FunFam" id="3.30.1550.10:FF:000001">
    <property type="entry name" value="50S ribosomal protein L11"/>
    <property type="match status" value="1"/>
</dbReference>
<dbReference type="Gene3D" id="1.10.10.250">
    <property type="entry name" value="Ribosomal protein L11, C-terminal domain"/>
    <property type="match status" value="1"/>
</dbReference>
<dbReference type="Gene3D" id="3.30.1550.10">
    <property type="entry name" value="Ribosomal protein L11/L12, N-terminal domain"/>
    <property type="match status" value="1"/>
</dbReference>
<dbReference type="HAMAP" id="MF_00736">
    <property type="entry name" value="Ribosomal_uL11"/>
    <property type="match status" value="1"/>
</dbReference>
<dbReference type="InterPro" id="IPR000911">
    <property type="entry name" value="Ribosomal_uL11"/>
</dbReference>
<dbReference type="InterPro" id="IPR006519">
    <property type="entry name" value="Ribosomal_uL11_bac-typ"/>
</dbReference>
<dbReference type="InterPro" id="IPR020783">
    <property type="entry name" value="Ribosomal_uL11_C"/>
</dbReference>
<dbReference type="InterPro" id="IPR036769">
    <property type="entry name" value="Ribosomal_uL11_C_sf"/>
</dbReference>
<dbReference type="InterPro" id="IPR020784">
    <property type="entry name" value="Ribosomal_uL11_N"/>
</dbReference>
<dbReference type="InterPro" id="IPR036796">
    <property type="entry name" value="Ribosomal_uL11_N_sf"/>
</dbReference>
<dbReference type="NCBIfam" id="TIGR01632">
    <property type="entry name" value="L11_bact"/>
    <property type="match status" value="1"/>
</dbReference>
<dbReference type="PANTHER" id="PTHR11661">
    <property type="entry name" value="60S RIBOSOMAL PROTEIN L12"/>
    <property type="match status" value="1"/>
</dbReference>
<dbReference type="PANTHER" id="PTHR11661:SF1">
    <property type="entry name" value="LARGE RIBOSOMAL SUBUNIT PROTEIN UL11M"/>
    <property type="match status" value="1"/>
</dbReference>
<dbReference type="Pfam" id="PF00298">
    <property type="entry name" value="Ribosomal_L11"/>
    <property type="match status" value="1"/>
</dbReference>
<dbReference type="Pfam" id="PF03946">
    <property type="entry name" value="Ribosomal_L11_N"/>
    <property type="match status" value="1"/>
</dbReference>
<dbReference type="SMART" id="SM00649">
    <property type="entry name" value="RL11"/>
    <property type="match status" value="1"/>
</dbReference>
<dbReference type="SUPFAM" id="SSF54747">
    <property type="entry name" value="Ribosomal L11/L12e N-terminal domain"/>
    <property type="match status" value="1"/>
</dbReference>
<dbReference type="SUPFAM" id="SSF46906">
    <property type="entry name" value="Ribosomal protein L11, C-terminal domain"/>
    <property type="match status" value="1"/>
</dbReference>
<protein>
    <recommendedName>
        <fullName evidence="1">Large ribosomal subunit protein uL11</fullName>
    </recommendedName>
    <alternativeName>
        <fullName evidence="2">50S ribosomal protein L11</fullName>
    </alternativeName>
</protein>